<proteinExistence type="evidence at protein level"/>
<gene>
    <name evidence="5" type="primary">ECA3</name>
    <name type="synonym">ACA6</name>
    <name evidence="8" type="ordered locus">At1g10130</name>
    <name evidence="10" type="ORF">F14N23.1</name>
    <name evidence="9" type="ORF">T27I1.16</name>
</gene>
<comment type="function">
    <text evidence="3 4 7">This magnesium-dependent enzyme catalyzes the hydrolysis of ATP coupled with the translocation of calcium from the cytosol to an endomembrane compartment (Probable). Involved in calcium-enhanced root growth, in tolerance to toxic levels of manganese and in secretory processes (PubMed:18567829). Has a crucial role in manganese nutrition, but is not involved in transporting copper, iron or zinc (PubMed:18024560).</text>
</comment>
<comment type="catalytic activity">
    <reaction evidence="4">
        <text>Ca(2+)(in) + ATP + H2O = Ca(2+)(out) + ADP + phosphate + H(+)</text>
        <dbReference type="Rhea" id="RHEA:18105"/>
        <dbReference type="ChEBI" id="CHEBI:15377"/>
        <dbReference type="ChEBI" id="CHEBI:15378"/>
        <dbReference type="ChEBI" id="CHEBI:29108"/>
        <dbReference type="ChEBI" id="CHEBI:30616"/>
        <dbReference type="ChEBI" id="CHEBI:43474"/>
        <dbReference type="ChEBI" id="CHEBI:456216"/>
        <dbReference type="EC" id="7.2.2.10"/>
    </reaction>
    <physiologicalReaction direction="left-to-right" evidence="4">
        <dbReference type="Rhea" id="RHEA:18106"/>
    </physiologicalReaction>
</comment>
<comment type="subcellular location">
    <subcellularLocation>
        <location evidence="3">Golgi apparatus membrane</location>
        <topology evidence="2">Multi-pass membrane protein</topology>
    </subcellularLocation>
    <subcellularLocation>
        <location evidence="4">Endosome membrane</location>
        <topology evidence="2">Multi-pass membrane protein</topology>
    </subcellularLocation>
    <subcellularLocation>
        <location evidence="4">Prevacuolar compartment membrane</location>
        <topology evidence="2">Multi-pass membrane protein</topology>
    </subcellularLocation>
</comment>
<comment type="tissue specificity">
    <text evidence="3 4">Expressed in root cap, in elongation and differentiation zones of roots, in vascular tissues of roots, leaves, floral pedicels and style, in leaves, including hydathodes and guard cells, in stamens, in petals, in sepals and in siliques.</text>
</comment>
<comment type="induction">
    <text evidence="3">Not induced by manganese or zinc.</text>
</comment>
<comment type="miscellaneous">
    <text>ECA3 is functionally distinct from ECA1 and is localized to a separate compartment.</text>
</comment>
<comment type="similarity">
    <text evidence="6">Belongs to the cation transport ATPase (P-type) (TC 3.A.3) family. Type IIA subfamily.</text>
</comment>
<comment type="sequence caution" evidence="6">
    <conflict type="erroneous gene model prediction">
        <sequence resource="EMBL-CDS" id="AAD32863"/>
    </conflict>
</comment>
<keyword id="KW-0067">ATP-binding</keyword>
<keyword id="KW-0106">Calcium</keyword>
<keyword id="KW-0109">Calcium transport</keyword>
<keyword id="KW-0967">Endosome</keyword>
<keyword id="KW-0333">Golgi apparatus</keyword>
<keyword id="KW-0406">Ion transport</keyword>
<keyword id="KW-0460">Magnesium</keyword>
<keyword id="KW-0472">Membrane</keyword>
<keyword id="KW-0479">Metal-binding</keyword>
<keyword id="KW-0547">Nucleotide-binding</keyword>
<keyword id="KW-1185">Reference proteome</keyword>
<keyword id="KW-1278">Translocase</keyword>
<keyword id="KW-0812">Transmembrane</keyword>
<keyword id="KW-1133">Transmembrane helix</keyword>
<keyword id="KW-0813">Transport</keyword>
<feature type="chain" id="PRO_0000046407" description="Calcium-transporting ATPase 3, endoplasmic reticulum-type">
    <location>
        <begin position="1"/>
        <end position="998"/>
    </location>
</feature>
<feature type="topological domain" description="Cytoplasmic" evidence="2">
    <location>
        <begin position="1"/>
        <end position="48"/>
    </location>
</feature>
<feature type="transmembrane region" description="Helical" evidence="2">
    <location>
        <begin position="49"/>
        <end position="69"/>
    </location>
</feature>
<feature type="topological domain" description="Lumenal" evidence="2">
    <location>
        <begin position="70"/>
        <end position="89"/>
    </location>
</feature>
<feature type="transmembrane region" description="Helical" evidence="2">
    <location>
        <begin position="90"/>
        <end position="109"/>
    </location>
</feature>
<feature type="topological domain" description="Cytoplasmic" evidence="2">
    <location>
        <begin position="110"/>
        <end position="250"/>
    </location>
</feature>
<feature type="transmembrane region" description="Helical" evidence="2">
    <location>
        <begin position="251"/>
        <end position="270"/>
    </location>
</feature>
<feature type="topological domain" description="Lumenal" evidence="2">
    <location>
        <begin position="271"/>
        <end position="291"/>
    </location>
</feature>
<feature type="transmembrane region" description="Helical" evidence="2">
    <location>
        <begin position="292"/>
        <end position="309"/>
    </location>
</feature>
<feature type="topological domain" description="Cytoplasmic" evidence="2">
    <location>
        <begin position="310"/>
        <end position="746"/>
    </location>
</feature>
<feature type="transmembrane region" description="Helical" evidence="2">
    <location>
        <begin position="747"/>
        <end position="766"/>
    </location>
</feature>
<feature type="topological domain" description="Lumenal" evidence="2">
    <location>
        <begin position="767"/>
        <end position="776"/>
    </location>
</feature>
<feature type="transmembrane region" description="Helical" evidence="2">
    <location>
        <begin position="777"/>
        <end position="797"/>
    </location>
</feature>
<feature type="topological domain" description="Cytoplasmic" evidence="2">
    <location>
        <begin position="798"/>
        <end position="817"/>
    </location>
</feature>
<feature type="transmembrane region" description="Helical" evidence="2">
    <location>
        <begin position="818"/>
        <end position="840"/>
    </location>
</feature>
<feature type="topological domain" description="Lumenal" evidence="2">
    <location>
        <begin position="841"/>
        <end position="883"/>
    </location>
</feature>
<feature type="transmembrane region" description="Helical" evidence="2">
    <location>
        <begin position="884"/>
        <end position="903"/>
    </location>
</feature>
<feature type="topological domain" description="Cytoplasmic" evidence="2">
    <location>
        <begin position="904"/>
        <end position="916"/>
    </location>
</feature>
<feature type="transmembrane region" description="Helical" evidence="2">
    <location>
        <begin position="917"/>
        <end position="935"/>
    </location>
</feature>
<feature type="topological domain" description="Lumenal" evidence="2">
    <location>
        <begin position="936"/>
        <end position="950"/>
    </location>
</feature>
<feature type="transmembrane region" description="Helical" evidence="2">
    <location>
        <begin position="951"/>
        <end position="971"/>
    </location>
</feature>
<feature type="topological domain" description="Cytoplasmic" evidence="2">
    <location>
        <begin position="972"/>
        <end position="998"/>
    </location>
</feature>
<feature type="active site" description="4-aspartylphosphate intermediate" evidence="1">
    <location>
        <position position="347"/>
    </location>
</feature>
<feature type="binding site" evidence="1">
    <location>
        <position position="300"/>
    </location>
    <ligand>
        <name>Ca(2+)</name>
        <dbReference type="ChEBI" id="CHEBI:29108"/>
        <label>2</label>
    </ligand>
</feature>
<feature type="binding site" evidence="1">
    <location>
        <position position="301"/>
    </location>
    <ligand>
        <name>Ca(2+)</name>
        <dbReference type="ChEBI" id="CHEBI:29108"/>
        <label>2</label>
    </ligand>
</feature>
<feature type="binding site" evidence="1">
    <location>
        <position position="303"/>
    </location>
    <ligand>
        <name>Ca(2+)</name>
        <dbReference type="ChEBI" id="CHEBI:29108"/>
        <label>2</label>
    </ligand>
</feature>
<feature type="binding site" evidence="1">
    <location>
        <position position="305"/>
    </location>
    <ligand>
        <name>Ca(2+)</name>
        <dbReference type="ChEBI" id="CHEBI:29108"/>
        <label>2</label>
    </ligand>
</feature>
<feature type="binding site" evidence="1">
    <location>
        <position position="692"/>
    </location>
    <ligand>
        <name>Mg(2+)</name>
        <dbReference type="ChEBI" id="CHEBI:18420"/>
    </ligand>
</feature>
<feature type="binding site" evidence="1">
    <location>
        <position position="696"/>
    </location>
    <ligand>
        <name>Mg(2+)</name>
        <dbReference type="ChEBI" id="CHEBI:18420"/>
    </ligand>
</feature>
<feature type="binding site" evidence="1">
    <location>
        <position position="757"/>
    </location>
    <ligand>
        <name>Ca(2+)</name>
        <dbReference type="ChEBI" id="CHEBI:29108"/>
        <label>1</label>
    </ligand>
</feature>
<feature type="binding site" evidence="1">
    <location>
        <position position="760"/>
    </location>
    <ligand>
        <name>Ca(2+)</name>
        <dbReference type="ChEBI" id="CHEBI:29108"/>
        <label>1</label>
    </ligand>
</feature>
<feature type="binding site" evidence="1">
    <location>
        <position position="785"/>
    </location>
    <ligand>
        <name>Ca(2+)</name>
        <dbReference type="ChEBI" id="CHEBI:29108"/>
        <label>2</label>
    </ligand>
</feature>
<feature type="binding site" evidence="1">
    <location>
        <position position="788"/>
    </location>
    <ligand>
        <name>Ca(2+)</name>
        <dbReference type="ChEBI" id="CHEBI:29108"/>
        <label>1</label>
    </ligand>
</feature>
<feature type="binding site" evidence="1">
    <location>
        <position position="789"/>
    </location>
    <ligand>
        <name>Ca(2+)</name>
        <dbReference type="ChEBI" id="CHEBI:29108"/>
        <label>1</label>
    </ligand>
</feature>
<feature type="binding site" evidence="1">
    <location>
        <position position="789"/>
    </location>
    <ligand>
        <name>Ca(2+)</name>
        <dbReference type="ChEBI" id="CHEBI:29108"/>
        <label>2</label>
    </ligand>
</feature>
<feature type="binding site" evidence="1">
    <location>
        <position position="894"/>
    </location>
    <ligand>
        <name>Ca(2+)</name>
        <dbReference type="ChEBI" id="CHEBI:29108"/>
        <label>1</label>
    </ligand>
</feature>
<feature type="sequence conflict" description="In Ref. 2; CAA10660." evidence="6" ref="2">
    <original>R</original>
    <variation>G</variation>
    <location>
        <position position="46"/>
    </location>
</feature>
<feature type="sequence conflict" description="In Ref. 1; AAD29961." evidence="6" ref="1">
    <original>KQ</original>
    <variation>NS</variation>
    <location>
        <begin position="55"/>
        <end position="56"/>
    </location>
</feature>
<feature type="sequence conflict" description="In Ref. 4; AAT68271." evidence="6" ref="4">
    <original>D</original>
    <variation>N</variation>
    <location>
        <position position="200"/>
    </location>
</feature>
<feature type="sequence conflict" description="In Ref. 1; AAD29961." evidence="6" ref="1">
    <original>TVSG</original>
    <variation>LLVE</variation>
    <location>
        <begin position="378"/>
        <end position="381"/>
    </location>
</feature>
<feature type="sequence conflict" description="In Ref. 4; AAT68271." evidence="6" ref="4">
    <original>A</original>
    <variation>T</variation>
    <location>
        <position position="411"/>
    </location>
</feature>
<feature type="sequence conflict" description="In Ref. 2; CAA10660." evidence="6" ref="2">
    <original>S</original>
    <variation>R</variation>
    <location>
        <position position="549"/>
    </location>
</feature>
<feature type="sequence conflict" description="In Ref. 4; AAT68271." evidence="6" ref="4">
    <location>
        <position position="586"/>
    </location>
</feature>
<feature type="sequence conflict" description="In Ref. 1; AAD29961." evidence="6" ref="1">
    <original>K</original>
    <variation>R</variation>
    <location>
        <position position="747"/>
    </location>
</feature>
<feature type="sequence conflict" description="In Ref. 1; AAD29961." evidence="6" ref="1">
    <original>FS</original>
    <variation>CA</variation>
    <location>
        <begin position="943"/>
        <end position="944"/>
    </location>
</feature>
<organism>
    <name type="scientific">Arabidopsis thaliana</name>
    <name type="common">Mouse-ear cress</name>
    <dbReference type="NCBI Taxonomy" id="3702"/>
    <lineage>
        <taxon>Eukaryota</taxon>
        <taxon>Viridiplantae</taxon>
        <taxon>Streptophyta</taxon>
        <taxon>Embryophyta</taxon>
        <taxon>Tracheophyta</taxon>
        <taxon>Spermatophyta</taxon>
        <taxon>Magnoliopsida</taxon>
        <taxon>eudicotyledons</taxon>
        <taxon>Gunneridae</taxon>
        <taxon>Pentapetalae</taxon>
        <taxon>rosids</taxon>
        <taxon>malvids</taxon>
        <taxon>Brassicales</taxon>
        <taxon>Brassicaceae</taxon>
        <taxon>Camelineae</taxon>
        <taxon>Arabidopsis</taxon>
    </lineage>
</organism>
<evidence type="ECO:0000250" key="1"/>
<evidence type="ECO:0000255" key="2"/>
<evidence type="ECO:0000269" key="3">
    <source>
    </source>
</evidence>
<evidence type="ECO:0000269" key="4">
    <source>
    </source>
</evidence>
<evidence type="ECO:0000303" key="5">
    <source ref="1"/>
</evidence>
<evidence type="ECO:0000305" key="6"/>
<evidence type="ECO:0000305" key="7">
    <source>
    </source>
</evidence>
<evidence type="ECO:0000312" key="8">
    <source>
        <dbReference type="Araport" id="AT1G10130"/>
    </source>
</evidence>
<evidence type="ECO:0000312" key="9">
    <source>
        <dbReference type="EMBL" id="AAC34328.2"/>
    </source>
</evidence>
<evidence type="ECO:0000312" key="10">
    <source>
        <dbReference type="EMBL" id="AAD32863.1"/>
    </source>
</evidence>
<name>ECA3_ARATH</name>
<sequence length="998" mass="109060">MEDAYARSVSEVLDFFGVDPTKGLSDSQVVHHSRLYGRNVLPEEKRTPFWKLVLKQFDDLLVKILIVAAIVSFVLALANGETGLTAFLEPFVILLILAANAAVGVITETNAEKALEELRAYQANIATVLRNGCFSILPATELVPGDIVEVTVGCKIPADLRMIEMSSNTFRVDQAILTGESCSVEKDVDCTLTTNAVYQDKKNILFSGTDVVAGRGRAVVIGVGSNTAMGSIHDSMLQTDDEATPLKKKLDEFGSFLAKVIAGICVLVWVVNIGHFSDPSHGGFFKGAIHYFKIAVALAVAAIPEGLPAVVTTCLALGTKKMARLNAIVRSLPSVETLGCTTVICSDKTGTLTTNMMSVSKICVVQSAEHGPMINEFTVSGTTYAPEGTVFDSNGMQLDLPAQSPCLHHLAMCSSLCNDSILQYNPDKDSYEKIGESTEVALRVLAEKVGLPGFDSMPSALNMLSKHERASYCNHYWENQFKKVYVLEFTRDRKMMSVLCSHKQMDVMFSKGAPESIIARCNKILCNGDGSVVPLTAAGRAELESRFYSFGDETLRCLALAFKTVPHGQQTISYDNENDLTFIGLVGMLDPPREEVRDAMLACMTAGIRVIVVTGDNKSTAESLCRKIGAFDNLVDFSGMSYTASEFERLPAVQQTLALRRMTLFSRVEPSHKRMLVEALQKQNEVVAMTGDGVNDAPALKKADIGIAMGSGTAVAKSASDMVLADDNFASIVAAVAEGRAIYNNTKQFIRYMISSNIGEVVCIFVAAVLGIPDTLAPVQLLWVNLVTDGLPATAIGFNKQDSDVMKAKPRKVGEAVVTGWLFFRYLVIGVYVGLATVAGFIWWFVYSDGGPKLTYSELMNFETCALRETTYPCSIFEDRHPSTVAMTVLVVVEMFNALNNLSENQSLLVITPRSNLWLVGSIILTMLLHVLILYVHPLAVLFSVTPLSWAEWTAVLYLSFPVIIIDELLKFLSRNTGMRFRFRLRKADLLPKDRRDK</sequence>
<accession>Q9SY55</accession>
<accession>Q0WP80</accession>
<accession>Q6DQH3</accession>
<accession>Q9SAV5</accession>
<accession>Q9SMX2</accession>
<accession>Q9SWS8</accession>
<reference key="1">
    <citation type="online journal article" date="1999" name="Plant Gene Register">
        <title>AtECA3 encodes a homolog of endoplasmic reticulum-type Ca2+-ATPase from Arabidopsis thaliana.</title>
        <authorList>
            <person name="Liang F."/>
            <person name="Sze H."/>
        </authorList>
        <locator>PGR99-077</locator>
    </citation>
    <scope>NUCLEOTIDE SEQUENCE [MRNA]</scope>
    <source>
        <strain>cv. Columbia</strain>
        <tissue>Seedling</tissue>
    </source>
</reference>
<reference key="2">
    <citation type="journal article" date="1999" name="Gene">
        <title>Two additional type IIA Ca(2+)-ATPases are expressed in Arabidopsis thaliana: evidence that type IIA sub-groups exist.</title>
        <authorList>
            <person name="Pittman J.K."/>
            <person name="Mills R.F."/>
            <person name="O'Connor C.D."/>
            <person name="Williams L.E."/>
        </authorList>
    </citation>
    <scope>NUCLEOTIDE SEQUENCE [MRNA]</scope>
    <source>
        <strain>cv. Landsberg erecta</strain>
    </source>
</reference>
<reference key="3">
    <citation type="journal article" date="2008" name="Plant Physiol.">
        <title>ECA3, a Golgi-localized P2A-type ATPase, plays a crucial role in manganese nutrition in Arabidopsis.</title>
        <authorList>
            <person name="Mills R.F."/>
            <person name="Doherty M.L."/>
            <person name="Lopez-Marques R.L."/>
            <person name="Weimar T."/>
            <person name="Dupree P."/>
            <person name="Palmgren M.G."/>
            <person name="Pittman J.K."/>
            <person name="Williams L.E."/>
        </authorList>
    </citation>
    <scope>NUCLEOTIDE SEQUENCE [MRNA]</scope>
    <scope>FUNCTION</scope>
    <scope>INDUCTION</scope>
    <scope>SUBCELLULAR LOCATION</scope>
    <scope>TISSUE SPECIFICITY</scope>
    <source>
        <strain>cv. Columbia</strain>
    </source>
</reference>
<reference key="4">
    <citation type="journal article" date="2008" name="Plant Physiol.">
        <title>A distinct endosomal Ca2+/Mn2+ pump affects root growth through the secretory process.</title>
        <authorList>
            <person name="Li X."/>
            <person name="Chanroj S."/>
            <person name="Wu Z."/>
            <person name="Romanowsky S.M."/>
            <person name="Harper J.F."/>
            <person name="Sze H."/>
        </authorList>
    </citation>
    <scope>NUCLEOTIDE SEQUENCE [MRNA]</scope>
    <scope>FUNCTION</scope>
    <scope>CATALYTIC ACTIVITY</scope>
    <scope>SUBCELLULAR LOCATION</scope>
    <scope>TISSUE SPECIFICITY</scope>
    <source>
        <strain>cv. Columbia</strain>
    </source>
</reference>
<reference key="5">
    <citation type="journal article" date="2000" name="Nature">
        <title>Sequence and analysis of chromosome 1 of the plant Arabidopsis thaliana.</title>
        <authorList>
            <person name="Theologis A."/>
            <person name="Ecker J.R."/>
            <person name="Palm C.J."/>
            <person name="Federspiel N.A."/>
            <person name="Kaul S."/>
            <person name="White O."/>
            <person name="Alonso J."/>
            <person name="Altafi H."/>
            <person name="Araujo R."/>
            <person name="Bowman C.L."/>
            <person name="Brooks S.Y."/>
            <person name="Buehler E."/>
            <person name="Chan A."/>
            <person name="Chao Q."/>
            <person name="Chen H."/>
            <person name="Cheuk R.F."/>
            <person name="Chin C.W."/>
            <person name="Chung M.K."/>
            <person name="Conn L."/>
            <person name="Conway A.B."/>
            <person name="Conway A.R."/>
            <person name="Creasy T.H."/>
            <person name="Dewar K."/>
            <person name="Dunn P."/>
            <person name="Etgu P."/>
            <person name="Feldblyum T.V."/>
            <person name="Feng J.-D."/>
            <person name="Fong B."/>
            <person name="Fujii C.Y."/>
            <person name="Gill J.E."/>
            <person name="Goldsmith A.D."/>
            <person name="Haas B."/>
            <person name="Hansen N.F."/>
            <person name="Hughes B."/>
            <person name="Huizar L."/>
            <person name="Hunter J.L."/>
            <person name="Jenkins J."/>
            <person name="Johnson-Hopson C."/>
            <person name="Khan S."/>
            <person name="Khaykin E."/>
            <person name="Kim C.J."/>
            <person name="Koo H.L."/>
            <person name="Kremenetskaia I."/>
            <person name="Kurtz D.B."/>
            <person name="Kwan A."/>
            <person name="Lam B."/>
            <person name="Langin-Hooper S."/>
            <person name="Lee A."/>
            <person name="Lee J.M."/>
            <person name="Lenz C.A."/>
            <person name="Li J.H."/>
            <person name="Li Y.-P."/>
            <person name="Lin X."/>
            <person name="Liu S.X."/>
            <person name="Liu Z.A."/>
            <person name="Luros J.S."/>
            <person name="Maiti R."/>
            <person name="Marziali A."/>
            <person name="Militscher J."/>
            <person name="Miranda M."/>
            <person name="Nguyen M."/>
            <person name="Nierman W.C."/>
            <person name="Osborne B.I."/>
            <person name="Pai G."/>
            <person name="Peterson J."/>
            <person name="Pham P.K."/>
            <person name="Rizzo M."/>
            <person name="Rooney T."/>
            <person name="Rowley D."/>
            <person name="Sakano H."/>
            <person name="Salzberg S.L."/>
            <person name="Schwartz J.R."/>
            <person name="Shinn P."/>
            <person name="Southwick A.M."/>
            <person name="Sun H."/>
            <person name="Tallon L.J."/>
            <person name="Tambunga G."/>
            <person name="Toriumi M.J."/>
            <person name="Town C.D."/>
            <person name="Utterback T."/>
            <person name="Van Aken S."/>
            <person name="Vaysberg M."/>
            <person name="Vysotskaia V.S."/>
            <person name="Walker M."/>
            <person name="Wu D."/>
            <person name="Yu G."/>
            <person name="Fraser C.M."/>
            <person name="Venter J.C."/>
            <person name="Davis R.W."/>
        </authorList>
    </citation>
    <scope>NUCLEOTIDE SEQUENCE [LARGE SCALE GENOMIC DNA]</scope>
    <source>
        <strain>cv. Columbia</strain>
    </source>
</reference>
<reference key="6">
    <citation type="journal article" date="2017" name="Plant J.">
        <title>Araport11: a complete reannotation of the Arabidopsis thaliana reference genome.</title>
        <authorList>
            <person name="Cheng C.Y."/>
            <person name="Krishnakumar V."/>
            <person name="Chan A.P."/>
            <person name="Thibaud-Nissen F."/>
            <person name="Schobel S."/>
            <person name="Town C.D."/>
        </authorList>
    </citation>
    <scope>GENOME REANNOTATION</scope>
    <source>
        <strain>cv. Columbia</strain>
    </source>
</reference>
<reference key="7">
    <citation type="submission" date="2006-07" db="EMBL/GenBank/DDBJ databases">
        <title>Large-scale analysis of RIKEN Arabidopsis full-length (RAFL) cDNAs.</title>
        <authorList>
            <person name="Totoki Y."/>
            <person name="Seki M."/>
            <person name="Ishida J."/>
            <person name="Nakajima M."/>
            <person name="Enju A."/>
            <person name="Kamiya A."/>
            <person name="Narusaka M."/>
            <person name="Shin-i T."/>
            <person name="Nakagawa M."/>
            <person name="Sakamoto N."/>
            <person name="Oishi K."/>
            <person name="Kohara Y."/>
            <person name="Kobayashi M."/>
            <person name="Toyoda A."/>
            <person name="Sakaki Y."/>
            <person name="Sakurai T."/>
            <person name="Iida K."/>
            <person name="Akiyama K."/>
            <person name="Satou M."/>
            <person name="Toyoda T."/>
            <person name="Konagaya A."/>
            <person name="Carninci P."/>
            <person name="Kawai J."/>
            <person name="Hayashizaki Y."/>
            <person name="Shinozaki K."/>
        </authorList>
    </citation>
    <scope>NUCLEOTIDE SEQUENCE [LARGE SCALE MRNA]</scope>
    <source>
        <strain>cv. Columbia</strain>
    </source>
</reference>
<protein>
    <recommendedName>
        <fullName evidence="6">Calcium-transporting ATPase 3, endoplasmic reticulum-type</fullName>
        <shortName evidence="5">AtECA3</shortName>
        <ecNumber>7.2.2.10</ecNumber>
    </recommendedName>
</protein>
<dbReference type="EC" id="7.2.2.10"/>
<dbReference type="EMBL" id="AF117296">
    <property type="protein sequence ID" value="AAD29961.1"/>
    <property type="molecule type" value="mRNA"/>
</dbReference>
<dbReference type="EMBL" id="AJ132388">
    <property type="protein sequence ID" value="CAA10660.1"/>
    <property type="molecule type" value="mRNA"/>
</dbReference>
<dbReference type="EMBL" id="EU082212">
    <property type="protein sequence ID" value="ABU53680.1"/>
    <property type="molecule type" value="mRNA"/>
</dbReference>
<dbReference type="EMBL" id="AY650902">
    <property type="protein sequence ID" value="AAT68271.1"/>
    <property type="molecule type" value="mRNA"/>
</dbReference>
<dbReference type="EMBL" id="AC004122">
    <property type="protein sequence ID" value="AAC34328.2"/>
    <property type="molecule type" value="Genomic_DNA"/>
</dbReference>
<dbReference type="EMBL" id="AC005489">
    <property type="protein sequence ID" value="AAD32863.1"/>
    <property type="status" value="ALT_SEQ"/>
    <property type="molecule type" value="Genomic_DNA"/>
</dbReference>
<dbReference type="EMBL" id="CP002684">
    <property type="protein sequence ID" value="AEE28545.1"/>
    <property type="molecule type" value="Genomic_DNA"/>
</dbReference>
<dbReference type="EMBL" id="AK229199">
    <property type="protein sequence ID" value="BAF01069.1"/>
    <property type="molecule type" value="mRNA"/>
</dbReference>
<dbReference type="PIR" id="T00633">
    <property type="entry name" value="T00633"/>
</dbReference>
<dbReference type="PIR" id="T52581">
    <property type="entry name" value="T52581"/>
</dbReference>
<dbReference type="RefSeq" id="NP_563860.1">
    <property type="nucleotide sequence ID" value="NM_100887.3"/>
</dbReference>
<dbReference type="SMR" id="Q9SY55"/>
<dbReference type="FunCoup" id="Q9SY55">
    <property type="interactions" value="3124"/>
</dbReference>
<dbReference type="STRING" id="3702.Q9SY55"/>
<dbReference type="TCDB" id="3.A.3.2.19">
    <property type="family name" value="the p-type atpase (p-atpase) superfamily"/>
</dbReference>
<dbReference type="PaxDb" id="3702-AT1G10130.1"/>
<dbReference type="ProteomicsDB" id="224717"/>
<dbReference type="EnsemblPlants" id="AT1G10130.1">
    <property type="protein sequence ID" value="AT1G10130.1"/>
    <property type="gene ID" value="AT1G10130"/>
</dbReference>
<dbReference type="GeneID" id="837550"/>
<dbReference type="Gramene" id="AT1G10130.1">
    <property type="protein sequence ID" value="AT1G10130.1"/>
    <property type="gene ID" value="AT1G10130"/>
</dbReference>
<dbReference type="KEGG" id="ath:AT1G10130"/>
<dbReference type="Araport" id="AT1G10130"/>
<dbReference type="TAIR" id="AT1G10130">
    <property type="gene designation" value="ECA3"/>
</dbReference>
<dbReference type="eggNOG" id="KOG0202">
    <property type="taxonomic scope" value="Eukaryota"/>
</dbReference>
<dbReference type="HOGENOM" id="CLU_002360_3_2_1"/>
<dbReference type="InParanoid" id="Q9SY55"/>
<dbReference type="OMA" id="PLWNNMM"/>
<dbReference type="PhylomeDB" id="Q9SY55"/>
<dbReference type="BioCyc" id="ARA:AT1G10130-MONOMER"/>
<dbReference type="BioCyc" id="MetaCyc:MONOMER-14610"/>
<dbReference type="BRENDA" id="7.2.2.10">
    <property type="organism ID" value="399"/>
</dbReference>
<dbReference type="PRO" id="PR:Q9SY55"/>
<dbReference type="Proteomes" id="UP000006548">
    <property type="component" value="Chromosome 1"/>
</dbReference>
<dbReference type="ExpressionAtlas" id="Q9SY55">
    <property type="expression patterns" value="baseline and differential"/>
</dbReference>
<dbReference type="GO" id="GO:0012505">
    <property type="term" value="C:endomembrane system"/>
    <property type="evidence" value="ECO:0000314"/>
    <property type="project" value="TAIR"/>
</dbReference>
<dbReference type="GO" id="GO:0005768">
    <property type="term" value="C:endosome"/>
    <property type="evidence" value="ECO:0007005"/>
    <property type="project" value="TAIR"/>
</dbReference>
<dbReference type="GO" id="GO:0010008">
    <property type="term" value="C:endosome membrane"/>
    <property type="evidence" value="ECO:0007669"/>
    <property type="project" value="UniProtKB-SubCell"/>
</dbReference>
<dbReference type="GO" id="GO:0005794">
    <property type="term" value="C:Golgi apparatus"/>
    <property type="evidence" value="ECO:0000314"/>
    <property type="project" value="TAIR"/>
</dbReference>
<dbReference type="GO" id="GO:0000139">
    <property type="term" value="C:Golgi membrane"/>
    <property type="evidence" value="ECO:0007669"/>
    <property type="project" value="UniProtKB-SubCell"/>
</dbReference>
<dbReference type="GO" id="GO:0005802">
    <property type="term" value="C:trans-Golgi network"/>
    <property type="evidence" value="ECO:0007005"/>
    <property type="project" value="TAIR"/>
</dbReference>
<dbReference type="GO" id="GO:0015410">
    <property type="term" value="F:ABC-type manganese transporter activity"/>
    <property type="evidence" value="ECO:0000315"/>
    <property type="project" value="TAIR"/>
</dbReference>
<dbReference type="GO" id="GO:0005524">
    <property type="term" value="F:ATP binding"/>
    <property type="evidence" value="ECO:0007669"/>
    <property type="project" value="UniProtKB-KW"/>
</dbReference>
<dbReference type="GO" id="GO:0016887">
    <property type="term" value="F:ATP hydrolysis activity"/>
    <property type="evidence" value="ECO:0007669"/>
    <property type="project" value="InterPro"/>
</dbReference>
<dbReference type="GO" id="GO:0046872">
    <property type="term" value="F:metal ion binding"/>
    <property type="evidence" value="ECO:0007669"/>
    <property type="project" value="UniProtKB-KW"/>
</dbReference>
<dbReference type="GO" id="GO:0005388">
    <property type="term" value="F:P-type calcium transporter activity"/>
    <property type="evidence" value="ECO:0000315"/>
    <property type="project" value="TAIR"/>
</dbReference>
<dbReference type="GO" id="GO:0006816">
    <property type="term" value="P:calcium ion transport"/>
    <property type="evidence" value="ECO:0000250"/>
    <property type="project" value="TAIR"/>
</dbReference>
<dbReference type="GO" id="GO:0055071">
    <property type="term" value="P:manganese ion homeostasis"/>
    <property type="evidence" value="ECO:0000315"/>
    <property type="project" value="TAIR"/>
</dbReference>
<dbReference type="GO" id="GO:0048364">
    <property type="term" value="P:root development"/>
    <property type="evidence" value="ECO:0000315"/>
    <property type="project" value="TAIR"/>
</dbReference>
<dbReference type="CDD" id="cd02083">
    <property type="entry name" value="P-type_ATPase_SERCA"/>
    <property type="match status" value="1"/>
</dbReference>
<dbReference type="FunFam" id="2.70.150.10:FF:000055">
    <property type="entry name" value="Calcium-transporting ATPase"/>
    <property type="match status" value="1"/>
</dbReference>
<dbReference type="FunFam" id="3.40.1110.10:FF:000037">
    <property type="entry name" value="Calcium-transporting ATPase"/>
    <property type="match status" value="1"/>
</dbReference>
<dbReference type="FunFam" id="1.20.1110.10:FF:000027">
    <property type="entry name" value="Calcium-transporting ATPase, putative"/>
    <property type="match status" value="1"/>
</dbReference>
<dbReference type="FunFam" id="1.20.1110.10:FF:000065">
    <property type="entry name" value="Sarcoplasmic/endoplasmic reticulum calcium ATPase 1"/>
    <property type="match status" value="1"/>
</dbReference>
<dbReference type="FunFam" id="3.40.50.1000:FF:000083">
    <property type="entry name" value="Sodium/potassium-transporting ATPase subunit alpha"/>
    <property type="match status" value="1"/>
</dbReference>
<dbReference type="Gene3D" id="3.40.1110.10">
    <property type="entry name" value="Calcium-transporting ATPase, cytoplasmic domain N"/>
    <property type="match status" value="1"/>
</dbReference>
<dbReference type="Gene3D" id="2.70.150.10">
    <property type="entry name" value="Calcium-transporting ATPase, cytoplasmic transduction domain A"/>
    <property type="match status" value="1"/>
</dbReference>
<dbReference type="Gene3D" id="1.20.1110.10">
    <property type="entry name" value="Calcium-transporting ATPase, transmembrane domain"/>
    <property type="match status" value="1"/>
</dbReference>
<dbReference type="Gene3D" id="3.40.50.1000">
    <property type="entry name" value="HAD superfamily/HAD-like"/>
    <property type="match status" value="1"/>
</dbReference>
<dbReference type="InterPro" id="IPR006068">
    <property type="entry name" value="ATPase_P-typ_cation-transptr_C"/>
</dbReference>
<dbReference type="InterPro" id="IPR004014">
    <property type="entry name" value="ATPase_P-typ_cation-transptr_N"/>
</dbReference>
<dbReference type="InterPro" id="IPR023299">
    <property type="entry name" value="ATPase_P-typ_cyto_dom_N"/>
</dbReference>
<dbReference type="InterPro" id="IPR018303">
    <property type="entry name" value="ATPase_P-typ_P_site"/>
</dbReference>
<dbReference type="InterPro" id="IPR023298">
    <property type="entry name" value="ATPase_P-typ_TM_dom_sf"/>
</dbReference>
<dbReference type="InterPro" id="IPR008250">
    <property type="entry name" value="ATPase_P-typ_transduc_dom_A_sf"/>
</dbReference>
<dbReference type="InterPro" id="IPR036412">
    <property type="entry name" value="HAD-like_sf"/>
</dbReference>
<dbReference type="InterPro" id="IPR023214">
    <property type="entry name" value="HAD_sf"/>
</dbReference>
<dbReference type="InterPro" id="IPR005782">
    <property type="entry name" value="P-type_ATPase_IIA"/>
</dbReference>
<dbReference type="InterPro" id="IPR001757">
    <property type="entry name" value="P_typ_ATPase"/>
</dbReference>
<dbReference type="InterPro" id="IPR044492">
    <property type="entry name" value="P_typ_ATPase_HD_dom"/>
</dbReference>
<dbReference type="NCBIfam" id="TIGR01116">
    <property type="entry name" value="ATPase-IIA1_Ca"/>
    <property type="match status" value="1"/>
</dbReference>
<dbReference type="NCBIfam" id="TIGR01494">
    <property type="entry name" value="ATPase_P-type"/>
    <property type="match status" value="2"/>
</dbReference>
<dbReference type="PANTHER" id="PTHR42861">
    <property type="entry name" value="CALCIUM-TRANSPORTING ATPASE"/>
    <property type="match status" value="1"/>
</dbReference>
<dbReference type="Pfam" id="PF13246">
    <property type="entry name" value="Cation_ATPase"/>
    <property type="match status" value="1"/>
</dbReference>
<dbReference type="Pfam" id="PF00689">
    <property type="entry name" value="Cation_ATPase_C"/>
    <property type="match status" value="1"/>
</dbReference>
<dbReference type="Pfam" id="PF00690">
    <property type="entry name" value="Cation_ATPase_N"/>
    <property type="match status" value="1"/>
</dbReference>
<dbReference type="Pfam" id="PF00122">
    <property type="entry name" value="E1-E2_ATPase"/>
    <property type="match status" value="1"/>
</dbReference>
<dbReference type="Pfam" id="PF00702">
    <property type="entry name" value="Hydrolase"/>
    <property type="match status" value="1"/>
</dbReference>
<dbReference type="PRINTS" id="PR00119">
    <property type="entry name" value="CATATPASE"/>
</dbReference>
<dbReference type="PRINTS" id="PR00120">
    <property type="entry name" value="HATPASE"/>
</dbReference>
<dbReference type="SFLD" id="SFLDS00003">
    <property type="entry name" value="Haloacid_Dehalogenase"/>
    <property type="match status" value="1"/>
</dbReference>
<dbReference type="SFLD" id="SFLDF00027">
    <property type="entry name" value="p-type_atpase"/>
    <property type="match status" value="1"/>
</dbReference>
<dbReference type="SMART" id="SM00831">
    <property type="entry name" value="Cation_ATPase_N"/>
    <property type="match status" value="1"/>
</dbReference>
<dbReference type="SUPFAM" id="SSF81653">
    <property type="entry name" value="Calcium ATPase, transduction domain A"/>
    <property type="match status" value="1"/>
</dbReference>
<dbReference type="SUPFAM" id="SSF81665">
    <property type="entry name" value="Calcium ATPase, transmembrane domain M"/>
    <property type="match status" value="1"/>
</dbReference>
<dbReference type="SUPFAM" id="SSF56784">
    <property type="entry name" value="HAD-like"/>
    <property type="match status" value="1"/>
</dbReference>
<dbReference type="SUPFAM" id="SSF81660">
    <property type="entry name" value="Metal cation-transporting ATPase, ATP-binding domain N"/>
    <property type="match status" value="1"/>
</dbReference>
<dbReference type="PROSITE" id="PS00154">
    <property type="entry name" value="ATPASE_E1_E2"/>
    <property type="match status" value="1"/>
</dbReference>